<evidence type="ECO:0000256" key="1">
    <source>
        <dbReference type="SAM" id="MobiDB-lite"/>
    </source>
</evidence>
<evidence type="ECO:0000269" key="2">
    <source>
    </source>
</evidence>
<evidence type="ECO:0000269" key="3">
    <source>
    </source>
</evidence>
<evidence type="ECO:0000269" key="4">
    <source>
    </source>
</evidence>
<evidence type="ECO:0000269" key="5">
    <source>
    </source>
</evidence>
<evidence type="ECO:0000269" key="6">
    <source>
    </source>
</evidence>
<evidence type="ECO:0000269" key="7">
    <source>
    </source>
</evidence>
<evidence type="ECO:0000303" key="8">
    <source>
    </source>
</evidence>
<evidence type="ECO:0000303" key="9">
    <source ref="2"/>
</evidence>
<evidence type="ECO:0000305" key="10"/>
<protein>
    <recommendedName>
        <fullName>Fibroblast growth factor 14</fullName>
        <shortName>FGF-14</shortName>
    </recommendedName>
    <alternativeName>
        <fullName>Fibroblast growth factor homologous factor 4</fullName>
        <shortName>FHF-4</shortName>
    </alternativeName>
</protein>
<dbReference type="EMBL" id="U66200">
    <property type="protein sequence ID" value="AAB18916.1"/>
    <property type="molecule type" value="mRNA"/>
</dbReference>
<dbReference type="EMBL" id="AY188178">
    <property type="protein sequence ID" value="AAO31806.1"/>
    <property type="molecule type" value="mRNA"/>
</dbReference>
<dbReference type="EMBL" id="AE014293">
    <property type="protein sequence ID" value="AAN16025.1"/>
    <property type="molecule type" value="Genomic_DNA"/>
</dbReference>
<dbReference type="EMBL" id="AL160153">
    <property type="status" value="NOT_ANNOTATED_CDS"/>
    <property type="molecule type" value="Genomic_DNA"/>
</dbReference>
<dbReference type="EMBL" id="AL512629">
    <property type="status" value="NOT_ANNOTATED_CDS"/>
    <property type="molecule type" value="Genomic_DNA"/>
</dbReference>
<dbReference type="EMBL" id="AL591909">
    <property type="status" value="NOT_ANNOTATED_CDS"/>
    <property type="molecule type" value="Genomic_DNA"/>
</dbReference>
<dbReference type="EMBL" id="AL356263">
    <property type="status" value="NOT_ANNOTATED_CDS"/>
    <property type="molecule type" value="Genomic_DNA"/>
</dbReference>
<dbReference type="EMBL" id="BC100920">
    <property type="protein sequence ID" value="AAI00921.1"/>
    <property type="molecule type" value="mRNA"/>
</dbReference>
<dbReference type="EMBL" id="BC100921">
    <property type="protein sequence ID" value="AAI00922.1"/>
    <property type="molecule type" value="mRNA"/>
</dbReference>
<dbReference type="EMBL" id="BC100922">
    <property type="protein sequence ID" value="AAI00923.1"/>
    <property type="molecule type" value="mRNA"/>
</dbReference>
<dbReference type="CCDS" id="CCDS9500.1">
    <molecule id="Q92915-2"/>
</dbReference>
<dbReference type="CCDS" id="CCDS9501.1">
    <molecule id="Q92915-1"/>
</dbReference>
<dbReference type="RefSeq" id="NP_004106.1">
    <molecule id="Q92915-1"/>
    <property type="nucleotide sequence ID" value="NM_004115.4"/>
</dbReference>
<dbReference type="RefSeq" id="NP_787125.1">
    <molecule id="Q92915-2"/>
    <property type="nucleotide sequence ID" value="NM_175929.3"/>
</dbReference>
<dbReference type="SMR" id="Q92915"/>
<dbReference type="BioGRID" id="108550">
    <property type="interactions" value="42"/>
</dbReference>
<dbReference type="FunCoup" id="Q92915">
    <property type="interactions" value="639"/>
</dbReference>
<dbReference type="IntAct" id="Q92915">
    <property type="interactions" value="47"/>
</dbReference>
<dbReference type="STRING" id="9606.ENSP00000365301"/>
<dbReference type="BindingDB" id="Q92915"/>
<dbReference type="ChEMBL" id="CHEMBL4739699"/>
<dbReference type="TCDB" id="1.A.108.1.3">
    <property type="family name" value="the fibroblast growth factor 2 (fgf2) family"/>
</dbReference>
<dbReference type="GlyGen" id="Q92915">
    <property type="glycosylation" value="1 site"/>
</dbReference>
<dbReference type="iPTMnet" id="Q92915"/>
<dbReference type="PhosphoSitePlus" id="Q92915"/>
<dbReference type="SwissPalm" id="Q92915"/>
<dbReference type="BioMuta" id="FGF14"/>
<dbReference type="DMDM" id="2494463"/>
<dbReference type="MassIVE" id="Q92915"/>
<dbReference type="PaxDb" id="9606-ENSP00000365301"/>
<dbReference type="PeptideAtlas" id="Q92915"/>
<dbReference type="ProteomicsDB" id="75600">
    <molecule id="Q92915-1"/>
</dbReference>
<dbReference type="ProteomicsDB" id="75601">
    <molecule id="Q92915-2"/>
</dbReference>
<dbReference type="Antibodypedia" id="35193">
    <property type="antibodies" value="197 antibodies from 33 providers"/>
</dbReference>
<dbReference type="DNASU" id="2259"/>
<dbReference type="Ensembl" id="ENST00000376131.9">
    <molecule id="Q92915-2"/>
    <property type="protein sequence ID" value="ENSP00000365301.3"/>
    <property type="gene ID" value="ENSG00000102466.17"/>
</dbReference>
<dbReference type="Ensembl" id="ENST00000376143.5">
    <molecule id="Q92915-1"/>
    <property type="protein sequence ID" value="ENSP00000365313.4"/>
    <property type="gene ID" value="ENSG00000102466.17"/>
</dbReference>
<dbReference type="GeneID" id="2259"/>
<dbReference type="KEGG" id="hsa:2259"/>
<dbReference type="MANE-Select" id="ENST00000376143.5">
    <property type="protein sequence ID" value="ENSP00000365313.4"/>
    <property type="RefSeq nucleotide sequence ID" value="NM_004115.4"/>
    <property type="RefSeq protein sequence ID" value="NP_004106.1"/>
</dbReference>
<dbReference type="UCSC" id="uc001vpe.3">
    <molecule id="Q92915-1"/>
    <property type="organism name" value="human"/>
</dbReference>
<dbReference type="AGR" id="HGNC:3671"/>
<dbReference type="CTD" id="2259"/>
<dbReference type="DisGeNET" id="2259"/>
<dbReference type="GeneCards" id="FGF14"/>
<dbReference type="GeneReviews" id="FGF14"/>
<dbReference type="HGNC" id="HGNC:3671">
    <property type="gene designation" value="FGF14"/>
</dbReference>
<dbReference type="HPA" id="ENSG00000102466">
    <property type="expression patterns" value="Tissue enhanced (brain, cervix)"/>
</dbReference>
<dbReference type="MalaCards" id="FGF14"/>
<dbReference type="MIM" id="193003">
    <property type="type" value="phenotype"/>
</dbReference>
<dbReference type="MIM" id="601515">
    <property type="type" value="gene"/>
</dbReference>
<dbReference type="MIM" id="620174">
    <property type="type" value="phenotype"/>
</dbReference>
<dbReference type="neXtProt" id="NX_Q92915"/>
<dbReference type="OpenTargets" id="ENSG00000102466"/>
<dbReference type="Orphanet" id="98764">
    <property type="disease" value="Spinocerebellar ataxia type 27A"/>
</dbReference>
<dbReference type="Orphanet" id="675216">
    <property type="disease" value="Spinocerebellar ataxia type 27B"/>
</dbReference>
<dbReference type="PharmGKB" id="PA28110"/>
<dbReference type="VEuPathDB" id="HostDB:ENSG00000102466"/>
<dbReference type="eggNOG" id="KOG3885">
    <property type="taxonomic scope" value="Eukaryota"/>
</dbReference>
<dbReference type="GeneTree" id="ENSGT00940000156984"/>
<dbReference type="HOGENOM" id="CLU_081609_2_0_1"/>
<dbReference type="InParanoid" id="Q92915"/>
<dbReference type="OMA" id="KRINSPH"/>
<dbReference type="OrthoDB" id="6158176at2759"/>
<dbReference type="PAN-GO" id="Q92915">
    <property type="GO annotations" value="4 GO annotations based on evolutionary models"/>
</dbReference>
<dbReference type="PhylomeDB" id="Q92915"/>
<dbReference type="TreeFam" id="TF317805"/>
<dbReference type="PathwayCommons" id="Q92915"/>
<dbReference type="Reactome" id="R-HSA-5576892">
    <property type="pathway name" value="Phase 0 - rapid depolarisation"/>
</dbReference>
<dbReference type="SignaLink" id="Q92915"/>
<dbReference type="SIGNOR" id="Q92915"/>
<dbReference type="BioGRID-ORCS" id="2259">
    <property type="hits" value="7 hits in 1151 CRISPR screens"/>
</dbReference>
<dbReference type="ChiTaRS" id="FGF14">
    <property type="organism name" value="human"/>
</dbReference>
<dbReference type="GeneWiki" id="FGF14"/>
<dbReference type="GenomeRNAi" id="2259"/>
<dbReference type="Pharos" id="Q92915">
    <property type="development level" value="Tbio"/>
</dbReference>
<dbReference type="PRO" id="PR:Q92915"/>
<dbReference type="Proteomes" id="UP000005640">
    <property type="component" value="Chromosome 13"/>
</dbReference>
<dbReference type="RNAct" id="Q92915">
    <property type="molecule type" value="protein"/>
</dbReference>
<dbReference type="Bgee" id="ENSG00000102466">
    <property type="expression patterns" value="Expressed in secondary oocyte and 137 other cell types or tissues"/>
</dbReference>
<dbReference type="GO" id="GO:0005737">
    <property type="term" value="C:cytoplasm"/>
    <property type="evidence" value="ECO:0000318"/>
    <property type="project" value="GO_Central"/>
</dbReference>
<dbReference type="GO" id="GO:0005634">
    <property type="term" value="C:nucleus"/>
    <property type="evidence" value="ECO:0000318"/>
    <property type="project" value="GO_Central"/>
</dbReference>
<dbReference type="GO" id="GO:0008083">
    <property type="term" value="F:growth factor activity"/>
    <property type="evidence" value="ECO:0000304"/>
    <property type="project" value="ProtInc"/>
</dbReference>
<dbReference type="GO" id="GO:0008201">
    <property type="term" value="F:heparin binding"/>
    <property type="evidence" value="ECO:0000314"/>
    <property type="project" value="MGI"/>
</dbReference>
<dbReference type="GO" id="GO:0017080">
    <property type="term" value="F:sodium channel regulator activity"/>
    <property type="evidence" value="ECO:0000318"/>
    <property type="project" value="GO_Central"/>
</dbReference>
<dbReference type="GO" id="GO:0007267">
    <property type="term" value="P:cell-cell signaling"/>
    <property type="evidence" value="ECO:0000304"/>
    <property type="project" value="ProtInc"/>
</dbReference>
<dbReference type="GO" id="GO:0007254">
    <property type="term" value="P:JNK cascade"/>
    <property type="evidence" value="ECO:0000353"/>
    <property type="project" value="MGI"/>
</dbReference>
<dbReference type="GO" id="GO:0007399">
    <property type="term" value="P:nervous system development"/>
    <property type="evidence" value="ECO:0000304"/>
    <property type="project" value="ProtInc"/>
</dbReference>
<dbReference type="GO" id="GO:0022008">
    <property type="term" value="P:neurogenesis"/>
    <property type="evidence" value="ECO:0000318"/>
    <property type="project" value="GO_Central"/>
</dbReference>
<dbReference type="GO" id="GO:0007165">
    <property type="term" value="P:signal transduction"/>
    <property type="evidence" value="ECO:0000304"/>
    <property type="project" value="ProtInc"/>
</dbReference>
<dbReference type="CDD" id="cd23330">
    <property type="entry name" value="beta-trefoil_FGF14"/>
    <property type="match status" value="1"/>
</dbReference>
<dbReference type="FunFam" id="2.80.10.50:FF:000001">
    <property type="entry name" value="Fibroblast growth factor"/>
    <property type="match status" value="1"/>
</dbReference>
<dbReference type="Gene3D" id="2.80.10.50">
    <property type="match status" value="1"/>
</dbReference>
<dbReference type="InterPro" id="IPR002209">
    <property type="entry name" value="Fibroblast_GF_fam"/>
</dbReference>
<dbReference type="InterPro" id="IPR008996">
    <property type="entry name" value="IL1/FGF"/>
</dbReference>
<dbReference type="PANTHER" id="PTHR11486">
    <property type="entry name" value="FIBROBLAST GROWTH FACTOR"/>
    <property type="match status" value="1"/>
</dbReference>
<dbReference type="Pfam" id="PF00167">
    <property type="entry name" value="FGF"/>
    <property type="match status" value="1"/>
</dbReference>
<dbReference type="PRINTS" id="PR00263">
    <property type="entry name" value="HBGFFGF"/>
</dbReference>
<dbReference type="PRINTS" id="PR00262">
    <property type="entry name" value="IL1HBGF"/>
</dbReference>
<dbReference type="SMART" id="SM00442">
    <property type="entry name" value="FGF"/>
    <property type="match status" value="1"/>
</dbReference>
<dbReference type="SUPFAM" id="SSF50353">
    <property type="entry name" value="Cytokine"/>
    <property type="match status" value="1"/>
</dbReference>
<dbReference type="PROSITE" id="PS00247">
    <property type="entry name" value="HBGF_FGF"/>
    <property type="match status" value="1"/>
</dbReference>
<feature type="chain" id="PRO_0000147610" description="Fibroblast growth factor 14">
    <location>
        <begin position="1"/>
        <end position="247"/>
    </location>
</feature>
<feature type="region of interest" description="Disordered" evidence="1">
    <location>
        <begin position="1"/>
        <end position="38"/>
    </location>
</feature>
<feature type="region of interest" description="Disordered" evidence="1">
    <location>
        <begin position="214"/>
        <end position="247"/>
    </location>
</feature>
<feature type="compositionally biased region" description="Basic and acidic residues" evidence="1">
    <location>
        <begin position="15"/>
        <end position="25"/>
    </location>
</feature>
<feature type="splice variant" id="VSP_029051" description="In isoform 2." evidence="8 9">
    <original>MAAAIASGLIRQKRQAREQHWDRPSASRRRSSPSKNRGLCNGNLVDIFSKVRIFGLKKRRLRRQ</original>
    <variation>MVKPVPLFRRTDFKLLLCNHKDLFFLRVSKLLDCFSPKSMWFLWNIFSKGTHMLQCLCGKSLKKNKNPT</variation>
    <location>
        <begin position="1"/>
        <end position="64"/>
    </location>
</feature>
<feature type="sequence variant" id="VAR_022735" description="In dbSNP:rs141304687." evidence="3">
    <original>G</original>
    <variation>C</variation>
    <location>
        <position position="42"/>
    </location>
</feature>
<feature type="sequence variant" id="VAR_022736" description="In SCA27A; dbSNP:rs104894393." evidence="2">
    <original>F</original>
    <variation>S</variation>
    <location>
        <position position="145"/>
    </location>
</feature>
<feature type="sequence variant" id="VAR_087533" description="In SCA27A." evidence="5">
    <location>
        <begin position="147"/>
        <end position="247"/>
    </location>
</feature>
<feature type="sequence variant" id="VAR_082821" description="In a colorectal cancer; dbSNP:rs2139298142." evidence="10">
    <original>W</original>
    <variation>C</variation>
    <location sequence="Q92915-2">
        <position position="44"/>
    </location>
</feature>
<gene>
    <name type="primary">FGF14</name>
    <name type="synonym">FHF4</name>
</gene>
<keyword id="KW-0025">Alternative splicing</keyword>
<keyword id="KW-0225">Disease variant</keyword>
<keyword id="KW-0339">Growth factor</keyword>
<keyword id="KW-0523">Neurodegeneration</keyword>
<keyword id="KW-0539">Nucleus</keyword>
<keyword id="KW-1267">Proteomics identification</keyword>
<keyword id="KW-1185">Reference proteome</keyword>
<keyword id="KW-0950">Spinocerebellar ataxia</keyword>
<keyword id="KW-0818">Triplet repeat expansion</keyword>
<reference key="1">
    <citation type="journal article" date="1996" name="Proc. Natl. Acad. Sci. U.S.A.">
        <title>Fibroblast growth factor (FGF) homologous factors: new members of the FGF family implicated in nervous system development.</title>
        <authorList>
            <person name="Smallwood P.M."/>
            <person name="Munoz-Sanjuan I."/>
            <person name="Tong P."/>
            <person name="Macke J.P."/>
            <person name="Hendry S.H."/>
            <person name="Gilbert D.J."/>
            <person name="Copeland N.G."/>
            <person name="Jenkins N.A."/>
            <person name="Nathans J."/>
        </authorList>
    </citation>
    <scope>NUCLEOTIDE SEQUENCE [MRNA] (ISOFORM 1)</scope>
    <source>
        <tissue>Retina</tissue>
    </source>
</reference>
<reference key="2">
    <citation type="submission" date="2002-11" db="EMBL/GenBank/DDBJ databases">
        <authorList>
            <person name="Bonner T.I."/>
        </authorList>
    </citation>
    <scope>NUCLEOTIDE SEQUENCE [MRNA] (ISOFORM 2)</scope>
    <source>
        <tissue>Brain</tissue>
    </source>
</reference>
<reference key="3">
    <citation type="journal article" date="2002" name="Proc. Natl. Acad. Sci. U.S.A.">
        <title>Genetic and physiological data implicating the new human gene G72 and the gene for D-amino acid oxidase in schizophrenia.</title>
        <authorList>
            <person name="Chumakov I."/>
            <person name="Blumenfeld M."/>
            <person name="Guerassimenko O."/>
            <person name="Cavarec L."/>
            <person name="Palicio M."/>
            <person name="Abderrahim H."/>
            <person name="Bougueleret L."/>
            <person name="Barry C."/>
            <person name="Tanaka H."/>
            <person name="La Rosa P."/>
            <person name="Puech A."/>
            <person name="Tahri N."/>
            <person name="Cohen-Akenine A."/>
            <person name="Delabrosse S."/>
            <person name="Lissarrague S."/>
            <person name="Picard F.-P."/>
            <person name="Maurice K."/>
            <person name="Essioux L."/>
            <person name="Millasseau P."/>
            <person name="Grel P."/>
            <person name="Debailleul V."/>
            <person name="Simon A.-M."/>
            <person name="Caterina D."/>
            <person name="Dufaure I."/>
            <person name="Malekzadeh K."/>
            <person name="Belova M."/>
            <person name="Luan J.-J."/>
            <person name="Bouillot M."/>
            <person name="Sambucy J.-L."/>
            <person name="Primas G."/>
            <person name="Saumier M."/>
            <person name="Boubkiri N."/>
            <person name="Martin-Saumier S."/>
            <person name="Nasroune M."/>
            <person name="Peixoto H."/>
            <person name="Delaye A."/>
            <person name="Pinchot V."/>
            <person name="Bastucci M."/>
            <person name="Guillou S."/>
            <person name="Chevillon M."/>
            <person name="Sainz-Fuertes R."/>
            <person name="Meguenni S."/>
            <person name="Aurich-Costa J."/>
            <person name="Cherif D."/>
            <person name="Gimalac A."/>
            <person name="Van Duijn C."/>
            <person name="Gauvreau D."/>
            <person name="Ouellette G."/>
            <person name="Fortier I."/>
            <person name="Raelson J."/>
            <person name="Sherbatich T."/>
            <person name="Riazanskay N."/>
            <person name="Rogaev E."/>
            <person name="Raeymaekers P."/>
            <person name="Aerssens J."/>
            <person name="Konings F."/>
            <person name="Luyten W."/>
            <person name="Macciardi F."/>
            <person name="Sham P.C."/>
            <person name="Straub R.E."/>
            <person name="Weinberger D.R."/>
            <person name="Cohen N."/>
            <person name="Cohen D."/>
        </authorList>
    </citation>
    <scope>NUCLEOTIDE SEQUENCE [GENOMIC DNA]</scope>
</reference>
<reference key="4">
    <citation type="journal article" date="2004" name="Nature">
        <title>The DNA sequence and analysis of human chromosome 13.</title>
        <authorList>
            <person name="Dunham A."/>
            <person name="Matthews L.H."/>
            <person name="Burton J."/>
            <person name="Ashurst J.L."/>
            <person name="Howe K.L."/>
            <person name="Ashcroft K.J."/>
            <person name="Beare D.M."/>
            <person name="Burford D.C."/>
            <person name="Hunt S.E."/>
            <person name="Griffiths-Jones S."/>
            <person name="Jones M.C."/>
            <person name="Keenan S.J."/>
            <person name="Oliver K."/>
            <person name="Scott C.E."/>
            <person name="Ainscough R."/>
            <person name="Almeida J.P."/>
            <person name="Ambrose K.D."/>
            <person name="Andrews D.T."/>
            <person name="Ashwell R.I.S."/>
            <person name="Babbage A.K."/>
            <person name="Bagguley C.L."/>
            <person name="Bailey J."/>
            <person name="Bannerjee R."/>
            <person name="Barlow K.F."/>
            <person name="Bates K."/>
            <person name="Beasley H."/>
            <person name="Bird C.P."/>
            <person name="Bray-Allen S."/>
            <person name="Brown A.J."/>
            <person name="Brown J.Y."/>
            <person name="Burrill W."/>
            <person name="Carder C."/>
            <person name="Carter N.P."/>
            <person name="Chapman J.C."/>
            <person name="Clamp M.E."/>
            <person name="Clark S.Y."/>
            <person name="Clarke G."/>
            <person name="Clee C.M."/>
            <person name="Clegg S.C."/>
            <person name="Cobley V."/>
            <person name="Collins J.E."/>
            <person name="Corby N."/>
            <person name="Coville G.J."/>
            <person name="Deloukas P."/>
            <person name="Dhami P."/>
            <person name="Dunham I."/>
            <person name="Dunn M."/>
            <person name="Earthrowl M.E."/>
            <person name="Ellington A.G."/>
            <person name="Faulkner L."/>
            <person name="Frankish A.G."/>
            <person name="Frankland J."/>
            <person name="French L."/>
            <person name="Garner P."/>
            <person name="Garnett J."/>
            <person name="Gilbert J.G.R."/>
            <person name="Gilson C.J."/>
            <person name="Ghori J."/>
            <person name="Grafham D.V."/>
            <person name="Gribble S.M."/>
            <person name="Griffiths C."/>
            <person name="Hall R.E."/>
            <person name="Hammond S."/>
            <person name="Harley J.L."/>
            <person name="Hart E.A."/>
            <person name="Heath P.D."/>
            <person name="Howden P.J."/>
            <person name="Huckle E.J."/>
            <person name="Hunt P.J."/>
            <person name="Hunt A.R."/>
            <person name="Johnson C."/>
            <person name="Johnson D."/>
            <person name="Kay M."/>
            <person name="Kimberley A.M."/>
            <person name="King A."/>
            <person name="Laird G.K."/>
            <person name="Langford C.J."/>
            <person name="Lawlor S."/>
            <person name="Leongamornlert D.A."/>
            <person name="Lloyd D.M."/>
            <person name="Lloyd C."/>
            <person name="Loveland J.E."/>
            <person name="Lovell J."/>
            <person name="Martin S."/>
            <person name="Mashreghi-Mohammadi M."/>
            <person name="McLaren S.J."/>
            <person name="McMurray A."/>
            <person name="Milne S."/>
            <person name="Moore M.J.F."/>
            <person name="Nickerson T."/>
            <person name="Palmer S.A."/>
            <person name="Pearce A.V."/>
            <person name="Peck A.I."/>
            <person name="Pelan S."/>
            <person name="Phillimore B."/>
            <person name="Porter K.M."/>
            <person name="Rice C.M."/>
            <person name="Searle S."/>
            <person name="Sehra H.K."/>
            <person name="Shownkeen R."/>
            <person name="Skuce C.D."/>
            <person name="Smith M."/>
            <person name="Steward C.A."/>
            <person name="Sycamore N."/>
            <person name="Tester J."/>
            <person name="Thomas D.W."/>
            <person name="Tracey A."/>
            <person name="Tromans A."/>
            <person name="Tubby B."/>
            <person name="Wall M."/>
            <person name="Wallis J.M."/>
            <person name="West A.P."/>
            <person name="Whitehead S.L."/>
            <person name="Willey D.L."/>
            <person name="Wilming L."/>
            <person name="Wray P.W."/>
            <person name="Wright M.W."/>
            <person name="Young L."/>
            <person name="Coulson A."/>
            <person name="Durbin R.M."/>
            <person name="Hubbard T."/>
            <person name="Sulston J.E."/>
            <person name="Beck S."/>
            <person name="Bentley D.R."/>
            <person name="Rogers J."/>
            <person name="Ross M.T."/>
        </authorList>
    </citation>
    <scope>NUCLEOTIDE SEQUENCE [LARGE SCALE GENOMIC DNA]</scope>
</reference>
<reference key="5">
    <citation type="journal article" date="2004" name="Genome Res.">
        <title>The status, quality, and expansion of the NIH full-length cDNA project: the Mammalian Gene Collection (MGC).</title>
        <authorList>
            <consortium name="The MGC Project Team"/>
        </authorList>
    </citation>
    <scope>NUCLEOTIDE SEQUENCE [LARGE SCALE MRNA] (ISOFORM 2)</scope>
</reference>
<reference key="6">
    <citation type="journal article" date="2016" name="Ann. Clin. Transl. Neurol.">
        <title>Pathogenic mechanism of recurrent mutations of SCN8A in epileptic encephalopathy.</title>
        <authorList>
            <person name="Wagnon J.L."/>
            <person name="Barker B.S."/>
            <person name="Hounshell J.A."/>
            <person name="Haaxma C.A."/>
            <person name="Shealy A."/>
            <person name="Moss T."/>
            <person name="Parikh S."/>
            <person name="Messer R.D."/>
            <person name="Patel M.K."/>
            <person name="Meisler M.H."/>
        </authorList>
    </citation>
    <scope>INTERACTION WITH SCN8A</scope>
</reference>
<reference key="7">
    <citation type="journal article" date="2003" name="Am. J. Hum. Genet.">
        <title>A mutation in the fibroblast growth factor 14 gene is associated with autosomal dominant cerebellar (sic) ataxia.</title>
        <authorList>
            <person name="van Swieten J.C."/>
            <person name="Brusse E."/>
            <person name="de Graaf B.M."/>
            <person name="Krieger E."/>
            <person name="van de Graaf R."/>
            <person name="de Koning I."/>
            <person name="Maat-Kievit A."/>
            <person name="Leegwater P."/>
            <person name="Dooijes D."/>
            <person name="Oostra B.A."/>
            <person name="Heutink P."/>
        </authorList>
    </citation>
    <scope>VARIANT SCA27A SER-145</scope>
</reference>
<reference key="8">
    <citation type="journal article" date="2003" name="Am. J. Hum. Genet.">
        <authorList>
            <person name="van Swieten J.C."/>
            <person name="Brusse E."/>
            <person name="de Graaf B.M."/>
            <person name="Krieger E."/>
            <person name="van de Graaf R."/>
            <person name="de Koning I."/>
            <person name="Maat-Kievit A."/>
            <person name="Leegwater P."/>
            <person name="Dooijes D."/>
            <person name="Oostra B.A."/>
            <person name="Heutink P."/>
        </authorList>
    </citation>
    <scope>ERRATUM OF PUBMED:12489043</scope>
</reference>
<reference key="9">
    <citation type="journal article" date="2005" name="Eur. J. Hum. Genet.">
        <title>Mutation analysis in the fibroblast growth factor 14 gene: frameshift mutation and polymorphisms in patients with inherited ataxias.</title>
        <authorList>
            <person name="Dalski A."/>
            <person name="Atici J."/>
            <person name="Kreuz F.R."/>
            <person name="Hellenbroich Y."/>
            <person name="Schwinger E."/>
            <person name="Zuehlke C."/>
        </authorList>
    </citation>
    <scope>VARIANT CYS-42</scope>
</reference>
<reference key="10">
    <citation type="journal article" date="2006" name="Science">
        <title>The consensus coding sequences of human breast and colorectal cancers.</title>
        <authorList>
            <person name="Sjoeblom T."/>
            <person name="Jones S."/>
            <person name="Wood L.D."/>
            <person name="Parsons D.W."/>
            <person name="Lin J."/>
            <person name="Barber T.D."/>
            <person name="Mandelker D."/>
            <person name="Leary R.J."/>
            <person name="Ptak J."/>
            <person name="Silliman N."/>
            <person name="Szabo S."/>
            <person name="Buckhaults P."/>
            <person name="Farrell C."/>
            <person name="Meeh P."/>
            <person name="Markowitz S.D."/>
            <person name="Willis J."/>
            <person name="Dawson D."/>
            <person name="Willson J.K.V."/>
            <person name="Gazdar A.F."/>
            <person name="Hartigan J."/>
            <person name="Wu L."/>
            <person name="Liu C."/>
            <person name="Parmigiani G."/>
            <person name="Park B.H."/>
            <person name="Bachman K.E."/>
            <person name="Papadopoulos N."/>
            <person name="Vogelstein B."/>
            <person name="Kinzler K.W."/>
            <person name="Velculescu V.E."/>
        </authorList>
    </citation>
    <scope>VARIANT [LARGE SCALE ANALYSIS] CYS-44 (ISOFORM 2)</scope>
</reference>
<reference key="11">
    <citation type="journal article" date="2020" name="Ann. Clin. Transl. Neurol.">
        <title>FGF14-related episodic ataxia: delineating the phenotype of Episodic Ataxia type 9.</title>
        <authorList>
            <person name="Piarroux J."/>
            <person name="Riant F."/>
            <person name="Humbertclaude V."/>
            <person name="Remerand G."/>
            <person name="Hadjadj J."/>
            <person name="Rejou F."/>
            <person name="Coubes C."/>
            <person name="Pinson L."/>
            <person name="Meyer P."/>
            <person name="Roubertie A."/>
        </authorList>
    </citation>
    <scope>VARIANT SCA27A 147-GLU--THR-247 DEL</scope>
    <scope>INVOLVEMENT IN SCA27A</scope>
</reference>
<reference key="12">
    <citation type="journal article" date="2023" name="Am. J. Hum. Genet.">
        <title>An intronic GAA repeat expansion in FGF14 causes the autosomal-dominant adult-onset ataxia SCA50/ATX-FGF14.</title>
        <authorList>
            <person name="Rafehi H."/>
            <person name="Read J."/>
            <person name="Szmulewicz D.J."/>
            <person name="Davies K.C."/>
            <person name="Snell P."/>
            <person name="Fearnley L.G."/>
            <person name="Scott L."/>
            <person name="Thomsen M."/>
            <person name="Gillies G."/>
            <person name="Pope K."/>
            <person name="Bennett M.F."/>
            <person name="Munro J.E."/>
            <person name="Ngo K.J."/>
            <person name="Chen L."/>
            <person name="Wallis M.J."/>
            <person name="Butler E.G."/>
            <person name="Kumar K.R."/>
            <person name="Wu K.H."/>
            <person name="Tomlinson S.E."/>
            <person name="Tisch S."/>
            <person name="Malhotra A."/>
            <person name="Lee-Archer M."/>
            <person name="Dolzhenko E."/>
            <person name="Eberle M.A."/>
            <person name="Roberts L.J."/>
            <person name="Fogel B.L."/>
            <person name="Brueggemann N."/>
            <person name="Lohmann K."/>
            <person name="Delatycki M.B."/>
            <person name="Bahlo M."/>
            <person name="Lockhart P.J."/>
        </authorList>
    </citation>
    <scope>INVOLVEMENT IN SCA27B</scope>
</reference>
<reference key="13">
    <citation type="journal article" date="2023" name="N. Engl. J. Med.">
        <title>Deep intronic FGF14 GAA repeat expansion in late-onset cerebellar ataxia.</title>
        <authorList>
            <person name="Pellerin D."/>
            <person name="Danzi M.C."/>
            <person name="Wilke C."/>
            <person name="Renaud M."/>
            <person name="Fazal S."/>
            <person name="Dicaire M.J."/>
            <person name="Scriba C.K."/>
            <person name="Ashton C."/>
            <person name="Yanick C."/>
            <person name="Beijer D."/>
            <person name="Rebelo A."/>
            <person name="Rocca C."/>
            <person name="Jaunmuktane Z."/>
            <person name="Sonnen J.A."/>
            <person name="Lariviere R."/>
            <person name="Genis D."/>
            <person name="Molina Porcel L."/>
            <person name="Choquet K."/>
            <person name="Sakalla R."/>
            <person name="Provost S."/>
            <person name="Robertson R."/>
            <person name="Allard-Chamard X."/>
            <person name="Tetreault M."/>
            <person name="Reiling S.J."/>
            <person name="Nagy S."/>
            <person name="Nishadham V."/>
            <person name="Purushottam M."/>
            <person name="Vengalil S."/>
            <person name="Bardhan M."/>
            <person name="Nalini A."/>
            <person name="Chen Z."/>
            <person name="Mathieu J."/>
            <person name="Massie R."/>
            <person name="Chalk C.H."/>
            <person name="Lafontaine A.L."/>
            <person name="Evoy F."/>
            <person name="Rioux M.F."/>
            <person name="Ragoussis J."/>
            <person name="Boycott K.M."/>
            <person name="Dube M.P."/>
            <person name="Duquette A."/>
            <person name="Houlden H."/>
            <person name="Ravenscroft G."/>
            <person name="Laing N.G."/>
            <person name="Lamont P.J."/>
            <person name="Saporta M.A."/>
            <person name="Schuele R."/>
            <person name="Schoels L."/>
            <person name="La Piana R."/>
            <person name="Synofzik M."/>
            <person name="Zuchner S."/>
            <person name="Brais B."/>
        </authorList>
    </citation>
    <scope>INVOLVEMENT IN SCA27B</scope>
</reference>
<comment type="function">
    <text>Probably involved in nervous system development and function.</text>
</comment>
<comment type="subunit">
    <text evidence="4">Interacts with SCN8A (PubMed:26900580).</text>
</comment>
<comment type="interaction">
    <interactant intactId="EBI-10489272">
        <id>Q92915</id>
    </interactant>
    <interactant intactId="EBI-77613">
        <id>P05067</id>
        <label>APP</label>
    </interactant>
    <organismsDiffer>false</organismsDiffer>
    <experiments>3</experiments>
</comment>
<comment type="interaction">
    <interactant intactId="EBI-12836320">
        <id>Q92915-2</id>
    </interactant>
    <interactant intactId="EBI-12562760">
        <id>Q13085-4</id>
        <label>ACACA</label>
    </interactant>
    <organismsDiffer>false</organismsDiffer>
    <experiments>3</experiments>
</comment>
<comment type="interaction">
    <interactant intactId="EBI-12836320">
        <id>Q92915-2</id>
    </interactant>
    <interactant intactId="EBI-707714">
        <id>Q92843</id>
        <label>BCL2L2</label>
    </interactant>
    <organismsDiffer>false</organismsDiffer>
    <experiments>3</experiments>
</comment>
<comment type="interaction">
    <interactant intactId="EBI-12836320">
        <id>Q92915-2</id>
    </interactant>
    <interactant intactId="EBI-491549">
        <id>P35222</id>
        <label>CTNNB1</label>
    </interactant>
    <organismsDiffer>false</organismsDiffer>
    <experiments>3</experiments>
</comment>
<comment type="interaction">
    <interactant intactId="EBI-12836320">
        <id>Q92915-2</id>
    </interactant>
    <interactant intactId="EBI-997830">
        <id>Q15438</id>
        <label>CYTH1</label>
    </interactant>
    <organismsDiffer>false</organismsDiffer>
    <experiments>3</experiments>
</comment>
<comment type="interaction">
    <interactant intactId="EBI-12836320">
        <id>Q92915-2</id>
    </interactant>
    <interactant intactId="EBI-2339219">
        <id>Q08426</id>
        <label>EHHADH</label>
    </interactant>
    <organismsDiffer>false</organismsDiffer>
    <experiments>3</experiments>
</comment>
<comment type="interaction">
    <interactant intactId="EBI-12836320">
        <id>Q92915-2</id>
    </interactant>
    <interactant intactId="EBI-719816">
        <id>Q9NWN3</id>
        <label>FBXO34</label>
    </interactant>
    <organismsDiffer>false</organismsDiffer>
    <experiments>3</experiments>
</comment>
<comment type="interaction">
    <interactant intactId="EBI-12836320">
        <id>Q92915-2</id>
    </interactant>
    <interactant intactId="EBI-724839">
        <id>Q14318</id>
        <label>FKBP8</label>
    </interactant>
    <organismsDiffer>false</organismsDiffer>
    <experiments>3</experiments>
</comment>
<comment type="interaction">
    <interactant intactId="EBI-12836320">
        <id>Q92915-2</id>
    </interactant>
    <interactant intactId="EBI-714482">
        <id>Q9BWH2</id>
        <label>FUNDC2</label>
    </interactant>
    <organismsDiffer>false</organismsDiffer>
    <experiments>3</experiments>
</comment>
<comment type="interaction">
    <interactant intactId="EBI-12836320">
        <id>Q92915-2</id>
    </interactant>
    <interactant intactId="EBI-10294329">
        <id>Q99525</id>
        <label>H4C7</label>
    </interactant>
    <organismsDiffer>false</organismsDiffer>
    <experiments>3</experiments>
</comment>
<comment type="interaction">
    <interactant intactId="EBI-12836320">
        <id>Q92915-2</id>
    </interactant>
    <interactant intactId="EBI-17244356">
        <id>P35452-2</id>
        <label>HOXD12</label>
    </interactant>
    <organismsDiffer>false</organismsDiffer>
    <experiments>3</experiments>
</comment>
<comment type="interaction">
    <interactant intactId="EBI-12836320">
        <id>Q92915-2</id>
    </interactant>
    <interactant intactId="EBI-3911344">
        <id>P27338</id>
        <label>MAOB</label>
    </interactant>
    <organismsDiffer>false</organismsDiffer>
    <experiments>3</experiments>
</comment>
<comment type="interaction">
    <interactant intactId="EBI-12836320">
        <id>Q92915-2</id>
    </interactant>
    <interactant intactId="EBI-10217913">
        <id>Q14D33</id>
        <label>RTP5</label>
    </interactant>
    <organismsDiffer>false</organismsDiffer>
    <experiments>3</experiments>
</comment>
<comment type="interaction">
    <interactant intactId="EBI-12836320">
        <id>Q92915-2</id>
    </interactant>
    <interactant intactId="EBI-2682072">
        <id>Q9UQD0</id>
        <label>SCN8A</label>
    </interactant>
    <organismsDiffer>false</organismsDiffer>
    <experiments>3</experiments>
</comment>
<comment type="interaction">
    <interactant intactId="EBI-12836320">
        <id>Q92915-2</id>
    </interactant>
    <interactant intactId="EBI-80690">
        <id>Q14683</id>
        <label>SMC1A</label>
    </interactant>
    <organismsDiffer>false</organismsDiffer>
    <experiments>3</experiments>
</comment>
<comment type="interaction">
    <interactant intactId="EBI-12836320">
        <id>Q92915-2</id>
    </interactant>
    <interactant intactId="EBI-10238936">
        <id>Q17RD7</id>
        <label>SYT16</label>
    </interactant>
    <organismsDiffer>false</organismsDiffer>
    <experiments>3</experiments>
</comment>
<comment type="interaction">
    <interactant intactId="EBI-12836320">
        <id>Q92915-2</id>
    </interactant>
    <interactant intactId="EBI-10210710">
        <id>P49638</id>
        <label>TTPA</label>
    </interactant>
    <organismsDiffer>false</organismsDiffer>
    <experiments>3</experiments>
</comment>
<comment type="subcellular location">
    <subcellularLocation>
        <location evidence="10">Nucleus</location>
    </subcellularLocation>
</comment>
<comment type="alternative products">
    <event type="alternative splicing"/>
    <isoform>
        <id>Q92915-1</id>
        <name>1</name>
        <sequence type="displayed"/>
    </isoform>
    <isoform>
        <id>Q92915-2</id>
        <name>2</name>
        <name>Isoform 1B</name>
        <sequence type="described" ref="VSP_029051"/>
    </isoform>
</comment>
<comment type="tissue specificity">
    <text>Nervous system.</text>
</comment>
<comment type="disease" evidence="2 5">
    <disease id="DI-01080">
        <name>Spinocerebellar ataxia 27A</name>
        <acronym>SCA27A</acronym>
        <description>A form of spinocerebellar ataxia, a clinically and genetically heterogeneous group of cerebellar disorders. Patients show progressive incoordination of gait and often poor coordination of hands, speech and eye movements, due to degeneration of the cerebellum with variable involvement of the brainstem and spinal cord. SCA27A is an autosomal dominant, slowly progressive form characterized by gait disturbances, ataxia with tremor, dysarthria, orofacial dyskinesia, gaze-evoked nystagmus, and learning disabilities. There is significant variability, and patients show various combinations of neurologic features.</description>
        <dbReference type="MIM" id="193003"/>
    </disease>
    <text>The disease is caused by variants affecting the gene represented in this entry.</text>
</comment>
<comment type="disease" evidence="6 7">
    <disease id="DI-06556">
        <name>Spinocerebellar ataxia 27B, late-onset</name>
        <acronym>SCA27B</acronym>
        <description>A form of spinocerebellar ataxia, a clinically and genetically heterogeneous group of cerebellar disorders. Patients show progressive incoordination of gait and often poor coordination of hands, speech and eye movements, due to degeneration of the cerebellum with variable involvement of the brainstem and spinal cord. SCA27B is an autosomal dominant, slowly progressive form characterized by the onset of gait and appendicular ataxia in adulthood.</description>
        <dbReference type="MIM" id="620174"/>
    </disease>
    <text evidence="6 7">The disease is caused by variants affecting the gene represented in this entry. SCA27B is caused by GAA(n) trinucleotide repeat expansions with a size above 250 repeats in FGF14 intron 1. Expansions ranging from 250 to 300 repeats are pathogenic albeit with reduced penetrance, whereas those above 300 are fully penetrant.</text>
</comment>
<comment type="similarity">
    <text evidence="10">Belongs to the heparin-binding growth factors family.</text>
</comment>
<name>FGF14_HUMAN</name>
<proteinExistence type="evidence at protein level"/>
<sequence length="247" mass="27702">MAAAIASGLIRQKRQAREQHWDRPSASRRRSSPSKNRGLCNGNLVDIFSKVRIFGLKKRRLRRQDPQLKGIVTRLYCRQGYYLQMHPDGALDGTKDDSTNSTLFNLIPVGLRVVAIQGVKTGLYIAMNGEGYLYPSELFTPECKFKESVFENYYVIYSSMLYRQQESGRAWFLGLNKEGQAMKGNRVKKTKPAAHFLPKPLEVAMYREPSLHDVGETVPKPGVTPSKSTSASAIMNGGKPVNKSKTT</sequence>
<organism>
    <name type="scientific">Homo sapiens</name>
    <name type="common">Human</name>
    <dbReference type="NCBI Taxonomy" id="9606"/>
    <lineage>
        <taxon>Eukaryota</taxon>
        <taxon>Metazoa</taxon>
        <taxon>Chordata</taxon>
        <taxon>Craniata</taxon>
        <taxon>Vertebrata</taxon>
        <taxon>Euteleostomi</taxon>
        <taxon>Mammalia</taxon>
        <taxon>Eutheria</taxon>
        <taxon>Euarchontoglires</taxon>
        <taxon>Primates</taxon>
        <taxon>Haplorrhini</taxon>
        <taxon>Catarrhini</taxon>
        <taxon>Hominidae</taxon>
        <taxon>Homo</taxon>
    </lineage>
</organism>
<accession>Q92915</accession>
<accession>Q86YN7</accession>
<accession>Q96QX6</accession>